<comment type="function">
    <text evidence="4">Component of the mitochondrial ribosome (mitoribosome), a dedicated translation machinery responsible for the synthesis of mitochondrial genome-encoded proteins, including at least some of the essential transmembrane subunits of the mitochondrial respiratory chain. The mitoribosomes are attached to the mitochondrial inner membrane and translation products are cotranslationally integrated into the membrane.</text>
</comment>
<comment type="subunit">
    <text evidence="1">Component of the mitochondrial large ribosomal subunit (mt-LSU). Mature N.crassa 74S mitochondrial ribosomes consist of a small (37S) and a large (54S) subunit. The 37S small subunit contains a 16S ribosomal RNA (16S mt-rRNA) and 32 different proteins. The 54S large subunit contains a 23S rRNA (23S mt-rRNA) and 42 different proteins. bL36m has a zinc binding site.</text>
</comment>
<comment type="subcellular location">
    <subcellularLocation>
        <location evidence="1">Mitochondrion</location>
    </subcellularLocation>
</comment>
<comment type="similarity">
    <text evidence="3">Belongs to the bacterial ribosomal protein bL36 family.</text>
</comment>
<proteinExistence type="evidence at protein level"/>
<keyword id="KW-0002">3D-structure</keyword>
<keyword id="KW-0496">Mitochondrion</keyword>
<keyword id="KW-1185">Reference proteome</keyword>
<keyword id="KW-0687">Ribonucleoprotein</keyword>
<keyword id="KW-0689">Ribosomal protein</keyword>
<name>RTC6_NEUCR</name>
<accession>Q7S4E7</accession>
<dbReference type="EMBL" id="CM002242">
    <property type="protein sequence ID" value="EAA30392.1"/>
    <property type="molecule type" value="Genomic_DNA"/>
</dbReference>
<dbReference type="RefSeq" id="XP_959628.1">
    <property type="nucleotide sequence ID" value="XM_954535.2"/>
</dbReference>
<dbReference type="PDB" id="6YWE">
    <property type="method" value="EM"/>
    <property type="resolution" value="2.99 A"/>
    <property type="chains" value="0=1-124"/>
</dbReference>
<dbReference type="PDB" id="6YWS">
    <property type="method" value="EM"/>
    <property type="resolution" value="2.74 A"/>
    <property type="chains" value="0=1-124"/>
</dbReference>
<dbReference type="PDB" id="6YWV">
    <property type="method" value="EM"/>
    <property type="resolution" value="3.03 A"/>
    <property type="chains" value="0=1-124"/>
</dbReference>
<dbReference type="PDB" id="6YWX">
    <property type="method" value="EM"/>
    <property type="resolution" value="3.10 A"/>
    <property type="chains" value="0=1-124"/>
</dbReference>
<dbReference type="PDB" id="6YWY">
    <property type="method" value="EM"/>
    <property type="resolution" value="3.05 A"/>
    <property type="chains" value="0=1-124"/>
</dbReference>
<dbReference type="PDBsum" id="6YWE"/>
<dbReference type="PDBsum" id="6YWS"/>
<dbReference type="PDBsum" id="6YWV"/>
<dbReference type="PDBsum" id="6YWX"/>
<dbReference type="PDBsum" id="6YWY"/>
<dbReference type="EMDB" id="EMD-10965"/>
<dbReference type="EMDB" id="EMD-10973"/>
<dbReference type="EMDB" id="EMD-10977"/>
<dbReference type="EMDB" id="EMD-10978"/>
<dbReference type="EMDB" id="EMD-10985"/>
<dbReference type="SMR" id="Q7S4E7"/>
<dbReference type="STRING" id="367110.Q7S4E7"/>
<dbReference type="PaxDb" id="5141-EFNCRP00000005357"/>
<dbReference type="EnsemblFungi" id="EAA30392">
    <property type="protein sequence ID" value="EAA30392"/>
    <property type="gene ID" value="NCU06038"/>
</dbReference>
<dbReference type="GeneID" id="3875766"/>
<dbReference type="KEGG" id="ncr:NCU06038"/>
<dbReference type="VEuPathDB" id="FungiDB:NCU06038"/>
<dbReference type="HOGENOM" id="CLU_135723_1_0_1"/>
<dbReference type="InParanoid" id="Q7S4E7"/>
<dbReference type="OMA" id="SHNRPVA"/>
<dbReference type="OrthoDB" id="10265903at2759"/>
<dbReference type="Proteomes" id="UP000001805">
    <property type="component" value="Chromosome 7, Linkage Group VII"/>
</dbReference>
<dbReference type="GO" id="GO:0005739">
    <property type="term" value="C:mitochondrion"/>
    <property type="evidence" value="ECO:0007669"/>
    <property type="project" value="UniProtKB-SubCell"/>
</dbReference>
<dbReference type="GO" id="GO:1990904">
    <property type="term" value="C:ribonucleoprotein complex"/>
    <property type="evidence" value="ECO:0007669"/>
    <property type="project" value="UniProtKB-KW"/>
</dbReference>
<dbReference type="GO" id="GO:0005840">
    <property type="term" value="C:ribosome"/>
    <property type="evidence" value="ECO:0007669"/>
    <property type="project" value="UniProtKB-KW"/>
</dbReference>
<dbReference type="GO" id="GO:0003735">
    <property type="term" value="F:structural constituent of ribosome"/>
    <property type="evidence" value="ECO:0007669"/>
    <property type="project" value="InterPro"/>
</dbReference>
<dbReference type="GO" id="GO:0006412">
    <property type="term" value="P:translation"/>
    <property type="evidence" value="ECO:0007669"/>
    <property type="project" value="InterPro"/>
</dbReference>
<dbReference type="HAMAP" id="MF_00251">
    <property type="entry name" value="Ribosomal_bL36"/>
    <property type="match status" value="1"/>
</dbReference>
<dbReference type="InterPro" id="IPR000473">
    <property type="entry name" value="Ribosomal_bL36"/>
</dbReference>
<dbReference type="InterPro" id="IPR035977">
    <property type="entry name" value="Ribosomal_bL36_sp"/>
</dbReference>
<dbReference type="InterPro" id="IPR052010">
    <property type="entry name" value="Ribosomal_LSU_bL36"/>
</dbReference>
<dbReference type="NCBIfam" id="TIGR01022">
    <property type="entry name" value="rpmJ_bact"/>
    <property type="match status" value="1"/>
</dbReference>
<dbReference type="PANTHER" id="PTHR18804">
    <property type="entry name" value="RIBOSOMAL PROTEIN"/>
    <property type="match status" value="1"/>
</dbReference>
<dbReference type="PANTHER" id="PTHR18804:SF16">
    <property type="entry name" value="RIBOSOMAL PROTEIN"/>
    <property type="match status" value="1"/>
</dbReference>
<dbReference type="Pfam" id="PF00444">
    <property type="entry name" value="Ribosomal_L36"/>
    <property type="match status" value="1"/>
</dbReference>
<dbReference type="SUPFAM" id="SSF57840">
    <property type="entry name" value="Ribosomal protein L36"/>
    <property type="match status" value="1"/>
</dbReference>
<sequence>MSNLFRSLASSMRALSLAAPRATAVNTTKTVVSTHQTRCLSQGLLSRHICTPMCSHNRPVAVCQSAKNGLQSKQQSRGMKVHSAIKKRCEHCKVVRRKANKRQNGYLYIICPANPRHKQRQGYR</sequence>
<feature type="chain" id="PRO_0000458627" description="Large ribosomal subunit protein bL36m">
    <location>
        <begin position="1"/>
        <end position="124"/>
    </location>
</feature>
<evidence type="ECO:0000269" key="1">
    <source>
    </source>
</evidence>
<evidence type="ECO:0000303" key="2">
    <source>
    </source>
</evidence>
<evidence type="ECO:0000305" key="3"/>
<evidence type="ECO:0000305" key="4">
    <source>
    </source>
</evidence>
<evidence type="ECO:0007744" key="5">
    <source>
        <dbReference type="PDB" id="6YWE"/>
    </source>
</evidence>
<evidence type="ECO:0007744" key="6">
    <source>
        <dbReference type="PDB" id="6YWS"/>
    </source>
</evidence>
<protein>
    <recommendedName>
        <fullName evidence="2">Large ribosomal subunit protein bL36m</fullName>
    </recommendedName>
</protein>
<reference key="1">
    <citation type="journal article" date="2003" name="Nature">
        <title>The genome sequence of the filamentous fungus Neurospora crassa.</title>
        <authorList>
            <person name="Galagan J.E."/>
            <person name="Calvo S.E."/>
            <person name="Borkovich K.A."/>
            <person name="Selker E.U."/>
            <person name="Read N.D."/>
            <person name="Jaffe D.B."/>
            <person name="FitzHugh W."/>
            <person name="Ma L.-J."/>
            <person name="Smirnov S."/>
            <person name="Purcell S."/>
            <person name="Rehman B."/>
            <person name="Elkins T."/>
            <person name="Engels R."/>
            <person name="Wang S."/>
            <person name="Nielsen C.B."/>
            <person name="Butler J."/>
            <person name="Endrizzi M."/>
            <person name="Qui D."/>
            <person name="Ianakiev P."/>
            <person name="Bell-Pedersen D."/>
            <person name="Nelson M.A."/>
            <person name="Werner-Washburne M."/>
            <person name="Selitrennikoff C.P."/>
            <person name="Kinsey J.A."/>
            <person name="Braun E.L."/>
            <person name="Zelter A."/>
            <person name="Schulte U."/>
            <person name="Kothe G.O."/>
            <person name="Jedd G."/>
            <person name="Mewes H.-W."/>
            <person name="Staben C."/>
            <person name="Marcotte E."/>
            <person name="Greenberg D."/>
            <person name="Roy A."/>
            <person name="Foley K."/>
            <person name="Naylor J."/>
            <person name="Stange-Thomann N."/>
            <person name="Barrett R."/>
            <person name="Gnerre S."/>
            <person name="Kamal M."/>
            <person name="Kamvysselis M."/>
            <person name="Mauceli E.W."/>
            <person name="Bielke C."/>
            <person name="Rudd S."/>
            <person name="Frishman D."/>
            <person name="Krystofova S."/>
            <person name="Rasmussen C."/>
            <person name="Metzenberg R.L."/>
            <person name="Perkins D.D."/>
            <person name="Kroken S."/>
            <person name="Cogoni C."/>
            <person name="Macino G."/>
            <person name="Catcheside D.E.A."/>
            <person name="Li W."/>
            <person name="Pratt R.J."/>
            <person name="Osmani S.A."/>
            <person name="DeSouza C.P.C."/>
            <person name="Glass N.L."/>
            <person name="Orbach M.J."/>
            <person name="Berglund J.A."/>
            <person name="Voelker R."/>
            <person name="Yarden O."/>
            <person name="Plamann M."/>
            <person name="Seiler S."/>
            <person name="Dunlap J.C."/>
            <person name="Radford A."/>
            <person name="Aramayo R."/>
            <person name="Natvig D.O."/>
            <person name="Alex L.A."/>
            <person name="Mannhaupt G."/>
            <person name="Ebbole D.J."/>
            <person name="Freitag M."/>
            <person name="Paulsen I."/>
            <person name="Sachs M.S."/>
            <person name="Lander E.S."/>
            <person name="Nusbaum C."/>
            <person name="Birren B.W."/>
        </authorList>
    </citation>
    <scope>NUCLEOTIDE SEQUENCE [LARGE SCALE GENOMIC DNA]</scope>
    <source>
        <strain>ATCC 24698 / 74-OR23-1A / CBS 708.71 / DSM 1257 / FGSC 987</strain>
    </source>
</reference>
<reference evidence="5 6" key="2">
    <citation type="journal article" date="2020" name="Nat. Commun.">
        <title>Analysis of translating mitoribosome reveals functional characteristics of translation in mitochondria of fungi.</title>
        <authorList>
            <person name="Itoh Y."/>
            <person name="Naschberger A."/>
            <person name="Mortezaei N."/>
            <person name="Herrmann J.M."/>
            <person name="Amunts A."/>
        </authorList>
    </citation>
    <scope>STRUCTURE BY ELECTRON MICROSCOPY (2.74 ANGSTROMS)</scope>
</reference>
<organism>
    <name type="scientific">Neurospora crassa (strain ATCC 24698 / 74-OR23-1A / CBS 708.71 / DSM 1257 / FGSC 987)</name>
    <dbReference type="NCBI Taxonomy" id="367110"/>
    <lineage>
        <taxon>Eukaryota</taxon>
        <taxon>Fungi</taxon>
        <taxon>Dikarya</taxon>
        <taxon>Ascomycota</taxon>
        <taxon>Pezizomycotina</taxon>
        <taxon>Sordariomycetes</taxon>
        <taxon>Sordariomycetidae</taxon>
        <taxon>Sordariales</taxon>
        <taxon>Sordariaceae</taxon>
        <taxon>Neurospora</taxon>
    </lineage>
</organism>
<gene>
    <name type="primary">rtc6</name>
    <name type="ORF">NCU06038</name>
</gene>